<evidence type="ECO:0000255" key="1">
    <source>
        <dbReference type="HAMAP-Rule" id="MF_01517"/>
    </source>
</evidence>
<gene>
    <name evidence="1" type="primary">mdh</name>
    <name type="ordered locus">LBF_1102</name>
</gene>
<feature type="chain" id="PRO_1000191623" description="Malate dehydrogenase">
    <location>
        <begin position="1"/>
        <end position="327"/>
    </location>
</feature>
<feature type="active site" description="Proton acceptor" evidence="1">
    <location>
        <position position="187"/>
    </location>
</feature>
<feature type="binding site" evidence="1">
    <location>
        <begin position="11"/>
        <end position="17"/>
    </location>
    <ligand>
        <name>NAD(+)</name>
        <dbReference type="ChEBI" id="CHEBI:57540"/>
    </ligand>
</feature>
<feature type="binding site" evidence="1">
    <location>
        <position position="92"/>
    </location>
    <ligand>
        <name>substrate</name>
    </ligand>
</feature>
<feature type="binding site" evidence="1">
    <location>
        <position position="98"/>
    </location>
    <ligand>
        <name>substrate</name>
    </ligand>
</feature>
<feature type="binding site" evidence="1">
    <location>
        <position position="105"/>
    </location>
    <ligand>
        <name>NAD(+)</name>
        <dbReference type="ChEBI" id="CHEBI:57540"/>
    </ligand>
</feature>
<feature type="binding site" evidence="1">
    <location>
        <position position="112"/>
    </location>
    <ligand>
        <name>NAD(+)</name>
        <dbReference type="ChEBI" id="CHEBI:57540"/>
    </ligand>
</feature>
<feature type="binding site" evidence="1">
    <location>
        <begin position="129"/>
        <end position="131"/>
    </location>
    <ligand>
        <name>NAD(+)</name>
        <dbReference type="ChEBI" id="CHEBI:57540"/>
    </ligand>
</feature>
<feature type="binding site" evidence="1">
    <location>
        <position position="131"/>
    </location>
    <ligand>
        <name>substrate</name>
    </ligand>
</feature>
<feature type="binding site" evidence="1">
    <location>
        <position position="162"/>
    </location>
    <ligand>
        <name>substrate</name>
    </ligand>
</feature>
<comment type="function">
    <text evidence="1">Catalyzes the reversible oxidation of malate to oxaloacetate.</text>
</comment>
<comment type="catalytic activity">
    <reaction evidence="1">
        <text>(S)-malate + NAD(+) = oxaloacetate + NADH + H(+)</text>
        <dbReference type="Rhea" id="RHEA:21432"/>
        <dbReference type="ChEBI" id="CHEBI:15378"/>
        <dbReference type="ChEBI" id="CHEBI:15589"/>
        <dbReference type="ChEBI" id="CHEBI:16452"/>
        <dbReference type="ChEBI" id="CHEBI:57540"/>
        <dbReference type="ChEBI" id="CHEBI:57945"/>
        <dbReference type="EC" id="1.1.1.37"/>
    </reaction>
</comment>
<comment type="similarity">
    <text evidence="1">Belongs to the LDH/MDH superfamily. MDH type 2 family.</text>
</comment>
<proteinExistence type="inferred from homology"/>
<name>MDH_LEPBA</name>
<keyword id="KW-0520">NAD</keyword>
<keyword id="KW-0560">Oxidoreductase</keyword>
<keyword id="KW-0816">Tricarboxylic acid cycle</keyword>
<reference key="1">
    <citation type="journal article" date="2008" name="PLoS ONE">
        <title>Genome sequence of the saprophyte Leptospira biflexa provides insights into the evolution of Leptospira and the pathogenesis of leptospirosis.</title>
        <authorList>
            <person name="Picardeau M."/>
            <person name="Bulach D.M."/>
            <person name="Bouchier C."/>
            <person name="Zuerner R.L."/>
            <person name="Zidane N."/>
            <person name="Wilson P.J."/>
            <person name="Creno S."/>
            <person name="Kuczek E.S."/>
            <person name="Bommezzadri S."/>
            <person name="Davis J.C."/>
            <person name="McGrath A."/>
            <person name="Johnson M.J."/>
            <person name="Boursaux-Eude C."/>
            <person name="Seemann T."/>
            <person name="Rouy Z."/>
            <person name="Coppel R.L."/>
            <person name="Rood J.I."/>
            <person name="Lajus A."/>
            <person name="Davies J.K."/>
            <person name="Medigue C."/>
            <person name="Adler B."/>
        </authorList>
    </citation>
    <scope>NUCLEOTIDE SEQUENCE [LARGE SCALE GENOMIC DNA]</scope>
    <source>
        <strain>Patoc 1 / Ames</strain>
    </source>
</reference>
<organism>
    <name type="scientific">Leptospira biflexa serovar Patoc (strain Patoc 1 / Ames)</name>
    <dbReference type="NCBI Taxonomy" id="355278"/>
    <lineage>
        <taxon>Bacteria</taxon>
        <taxon>Pseudomonadati</taxon>
        <taxon>Spirochaetota</taxon>
        <taxon>Spirochaetia</taxon>
        <taxon>Leptospirales</taxon>
        <taxon>Leptospiraceae</taxon>
        <taxon>Leptospira</taxon>
    </lineage>
</organism>
<protein>
    <recommendedName>
        <fullName evidence="1">Malate dehydrogenase</fullName>
        <ecNumber evidence="1">1.1.1.37</ecNumber>
    </recommendedName>
</protein>
<dbReference type="EC" id="1.1.1.37" evidence="1"/>
<dbReference type="EMBL" id="CP000777">
    <property type="protein sequence ID" value="ABZ93628.1"/>
    <property type="molecule type" value="Genomic_DNA"/>
</dbReference>
<dbReference type="RefSeq" id="WP_012388143.1">
    <property type="nucleotide sequence ID" value="NC_010842.1"/>
</dbReference>
<dbReference type="SMR" id="B0SF41"/>
<dbReference type="KEGG" id="lbf:LBF_1102"/>
<dbReference type="HOGENOM" id="CLU_040727_2_0_12"/>
<dbReference type="GO" id="GO:0030060">
    <property type="term" value="F:L-malate dehydrogenase (NAD+) activity"/>
    <property type="evidence" value="ECO:0007669"/>
    <property type="project" value="UniProtKB-UniRule"/>
</dbReference>
<dbReference type="GO" id="GO:0006108">
    <property type="term" value="P:malate metabolic process"/>
    <property type="evidence" value="ECO:0007669"/>
    <property type="project" value="InterPro"/>
</dbReference>
<dbReference type="GO" id="GO:0006099">
    <property type="term" value="P:tricarboxylic acid cycle"/>
    <property type="evidence" value="ECO:0007669"/>
    <property type="project" value="UniProtKB-UniRule"/>
</dbReference>
<dbReference type="CDD" id="cd01338">
    <property type="entry name" value="MDH_chloroplast-like"/>
    <property type="match status" value="1"/>
</dbReference>
<dbReference type="FunFam" id="3.40.50.720:FF:000010">
    <property type="entry name" value="Malate dehydrogenase"/>
    <property type="match status" value="1"/>
</dbReference>
<dbReference type="FunFam" id="3.90.110.10:FF:000002">
    <property type="entry name" value="Malate dehydrogenase"/>
    <property type="match status" value="1"/>
</dbReference>
<dbReference type="Gene3D" id="3.90.110.10">
    <property type="entry name" value="Lactate dehydrogenase/glycoside hydrolase, family 4, C-terminal"/>
    <property type="match status" value="1"/>
</dbReference>
<dbReference type="Gene3D" id="3.40.50.720">
    <property type="entry name" value="NAD(P)-binding Rossmann-like Domain"/>
    <property type="match status" value="1"/>
</dbReference>
<dbReference type="HAMAP" id="MF_01517">
    <property type="entry name" value="Malate_dehydrog_2"/>
    <property type="match status" value="1"/>
</dbReference>
<dbReference type="InterPro" id="IPR001557">
    <property type="entry name" value="L-lactate/malate_DH"/>
</dbReference>
<dbReference type="InterPro" id="IPR022383">
    <property type="entry name" value="Lactate/malate_DH_C"/>
</dbReference>
<dbReference type="InterPro" id="IPR001236">
    <property type="entry name" value="Lactate/malate_DH_N"/>
</dbReference>
<dbReference type="InterPro" id="IPR015955">
    <property type="entry name" value="Lactate_DH/Glyco_Ohase_4_C"/>
</dbReference>
<dbReference type="InterPro" id="IPR010945">
    <property type="entry name" value="Malate_DH_type2"/>
</dbReference>
<dbReference type="InterPro" id="IPR036291">
    <property type="entry name" value="NAD(P)-bd_dom_sf"/>
</dbReference>
<dbReference type="NCBIfam" id="TIGR01759">
    <property type="entry name" value="MalateDH-SF1"/>
    <property type="match status" value="1"/>
</dbReference>
<dbReference type="NCBIfam" id="NF003916">
    <property type="entry name" value="PRK05442.1"/>
    <property type="match status" value="1"/>
</dbReference>
<dbReference type="PANTHER" id="PTHR23382">
    <property type="entry name" value="MALATE DEHYDROGENASE"/>
    <property type="match status" value="1"/>
</dbReference>
<dbReference type="Pfam" id="PF02866">
    <property type="entry name" value="Ldh_1_C"/>
    <property type="match status" value="1"/>
</dbReference>
<dbReference type="Pfam" id="PF00056">
    <property type="entry name" value="Ldh_1_N"/>
    <property type="match status" value="1"/>
</dbReference>
<dbReference type="PIRSF" id="PIRSF000102">
    <property type="entry name" value="Lac_mal_DH"/>
    <property type="match status" value="1"/>
</dbReference>
<dbReference type="SUPFAM" id="SSF56327">
    <property type="entry name" value="LDH C-terminal domain-like"/>
    <property type="match status" value="1"/>
</dbReference>
<dbReference type="SUPFAM" id="SSF51735">
    <property type="entry name" value="NAD(P)-binding Rossmann-fold domains"/>
    <property type="match status" value="1"/>
</dbReference>
<sequence>MSKKVKVAVTGAAGQIGYALLFRIASGQMFGPDTAVELQLLELEQAIPAAKGVIMELDDCAFPLLEKVSVSSNIDEAFRDINWALLVGSVPRKAGMERGDLLKINGGIFTTQGKAIEKNAASDVRVLVVGNPCNTNALIAMNNAKGVPSDRWFAMTGLDENRAKTQLAQKAGVLVKDVSNVAIWGNHSATQYPDFFNAKVNGKPATDVISDHDWLKGDFISTVQKRGAAIIAARGASSAASAANAVVDTVHNIVTPTKPGDWFSAACHSNGEYGVDKGLIFGYPLKSDGKKVEIVTGLEINAFGKEKFDITHNELKEERNEVKDMLG</sequence>
<accession>B0SF41</accession>